<dbReference type="EMBL" id="BX640422">
    <property type="protein sequence ID" value="CAE43892.1"/>
    <property type="molecule type" value="Genomic_DNA"/>
</dbReference>
<dbReference type="RefSeq" id="NP_882144.1">
    <property type="nucleotide sequence ID" value="NC_002929.2"/>
</dbReference>
<dbReference type="RefSeq" id="WP_003806925.1">
    <property type="nucleotide sequence ID" value="NZ_CP039022.1"/>
</dbReference>
<dbReference type="SMR" id="Q7VTB2"/>
<dbReference type="STRING" id="257313.BP3635"/>
<dbReference type="PaxDb" id="257313-BP3635"/>
<dbReference type="GeneID" id="69600137"/>
<dbReference type="KEGG" id="bpe:BP3635"/>
<dbReference type="PATRIC" id="fig|257313.5.peg.3932"/>
<dbReference type="eggNOG" id="COG0200">
    <property type="taxonomic scope" value="Bacteria"/>
</dbReference>
<dbReference type="HOGENOM" id="CLU_055188_4_2_4"/>
<dbReference type="Proteomes" id="UP000002676">
    <property type="component" value="Chromosome"/>
</dbReference>
<dbReference type="GO" id="GO:0022625">
    <property type="term" value="C:cytosolic large ribosomal subunit"/>
    <property type="evidence" value="ECO:0007669"/>
    <property type="project" value="TreeGrafter"/>
</dbReference>
<dbReference type="GO" id="GO:0019843">
    <property type="term" value="F:rRNA binding"/>
    <property type="evidence" value="ECO:0007669"/>
    <property type="project" value="UniProtKB-UniRule"/>
</dbReference>
<dbReference type="GO" id="GO:0003735">
    <property type="term" value="F:structural constituent of ribosome"/>
    <property type="evidence" value="ECO:0007669"/>
    <property type="project" value="InterPro"/>
</dbReference>
<dbReference type="GO" id="GO:0006412">
    <property type="term" value="P:translation"/>
    <property type="evidence" value="ECO:0007669"/>
    <property type="project" value="UniProtKB-UniRule"/>
</dbReference>
<dbReference type="Gene3D" id="3.100.10.10">
    <property type="match status" value="1"/>
</dbReference>
<dbReference type="HAMAP" id="MF_01341">
    <property type="entry name" value="Ribosomal_uL15"/>
    <property type="match status" value="1"/>
</dbReference>
<dbReference type="InterPro" id="IPR030878">
    <property type="entry name" value="Ribosomal_uL15"/>
</dbReference>
<dbReference type="InterPro" id="IPR021131">
    <property type="entry name" value="Ribosomal_uL15/eL18"/>
</dbReference>
<dbReference type="InterPro" id="IPR036227">
    <property type="entry name" value="Ribosomal_uL15/eL18_sf"/>
</dbReference>
<dbReference type="InterPro" id="IPR005749">
    <property type="entry name" value="Ribosomal_uL15_bac-type"/>
</dbReference>
<dbReference type="NCBIfam" id="TIGR01071">
    <property type="entry name" value="rplO_bact"/>
    <property type="match status" value="1"/>
</dbReference>
<dbReference type="PANTHER" id="PTHR12934">
    <property type="entry name" value="50S RIBOSOMAL PROTEIN L15"/>
    <property type="match status" value="1"/>
</dbReference>
<dbReference type="PANTHER" id="PTHR12934:SF11">
    <property type="entry name" value="LARGE RIBOSOMAL SUBUNIT PROTEIN UL15M"/>
    <property type="match status" value="1"/>
</dbReference>
<dbReference type="Pfam" id="PF00828">
    <property type="entry name" value="Ribosomal_L27A"/>
    <property type="match status" value="1"/>
</dbReference>
<dbReference type="SUPFAM" id="SSF52080">
    <property type="entry name" value="Ribosomal proteins L15p and L18e"/>
    <property type="match status" value="1"/>
</dbReference>
<proteinExistence type="inferred from homology"/>
<organism>
    <name type="scientific">Bordetella pertussis (strain Tohama I / ATCC BAA-589 / NCTC 13251)</name>
    <dbReference type="NCBI Taxonomy" id="257313"/>
    <lineage>
        <taxon>Bacteria</taxon>
        <taxon>Pseudomonadati</taxon>
        <taxon>Pseudomonadota</taxon>
        <taxon>Betaproteobacteria</taxon>
        <taxon>Burkholderiales</taxon>
        <taxon>Alcaligenaceae</taxon>
        <taxon>Bordetella</taxon>
    </lineage>
</organism>
<protein>
    <recommendedName>
        <fullName evidence="1">Large ribosomal subunit protein uL15</fullName>
    </recommendedName>
    <alternativeName>
        <fullName evidence="3">50S ribosomal protein L15</fullName>
    </alternativeName>
</protein>
<reference key="1">
    <citation type="journal article" date="2003" name="Nat. Genet.">
        <title>Comparative analysis of the genome sequences of Bordetella pertussis, Bordetella parapertussis and Bordetella bronchiseptica.</title>
        <authorList>
            <person name="Parkhill J."/>
            <person name="Sebaihia M."/>
            <person name="Preston A."/>
            <person name="Murphy L.D."/>
            <person name="Thomson N.R."/>
            <person name="Harris D.E."/>
            <person name="Holden M.T.G."/>
            <person name="Churcher C.M."/>
            <person name="Bentley S.D."/>
            <person name="Mungall K.L."/>
            <person name="Cerdeno-Tarraga A.-M."/>
            <person name="Temple L."/>
            <person name="James K.D."/>
            <person name="Harris B."/>
            <person name="Quail M.A."/>
            <person name="Achtman M."/>
            <person name="Atkin R."/>
            <person name="Baker S."/>
            <person name="Basham D."/>
            <person name="Bason N."/>
            <person name="Cherevach I."/>
            <person name="Chillingworth T."/>
            <person name="Collins M."/>
            <person name="Cronin A."/>
            <person name="Davis P."/>
            <person name="Doggett J."/>
            <person name="Feltwell T."/>
            <person name="Goble A."/>
            <person name="Hamlin N."/>
            <person name="Hauser H."/>
            <person name="Holroyd S."/>
            <person name="Jagels K."/>
            <person name="Leather S."/>
            <person name="Moule S."/>
            <person name="Norberczak H."/>
            <person name="O'Neil S."/>
            <person name="Ormond D."/>
            <person name="Price C."/>
            <person name="Rabbinowitsch E."/>
            <person name="Rutter S."/>
            <person name="Sanders M."/>
            <person name="Saunders D."/>
            <person name="Seeger K."/>
            <person name="Sharp S."/>
            <person name="Simmonds M."/>
            <person name="Skelton J."/>
            <person name="Squares R."/>
            <person name="Squares S."/>
            <person name="Stevens K."/>
            <person name="Unwin L."/>
            <person name="Whitehead S."/>
            <person name="Barrell B.G."/>
            <person name="Maskell D.J."/>
        </authorList>
    </citation>
    <scope>NUCLEOTIDE SEQUENCE [LARGE SCALE GENOMIC DNA]</scope>
    <source>
        <strain>Tohama I / ATCC BAA-589 / NCTC 13251</strain>
    </source>
</reference>
<name>RL15_BORPE</name>
<gene>
    <name evidence="1" type="primary">rplO</name>
    <name type="ordered locus">BP3635</name>
</gene>
<sequence length="146" mass="15368">MSDIQLNTLKPAEGSKHAKRRVGRGIGSGLGKTAGRGHKGQKSRSGGFHKVGFEGGQMPLQRRLPKRGFTPLGQHLYAEVRLSELQLMEAEEIDVQALKAAGVVGQSVRYAKVIKSGELSRKVVLRGITATAGARAAIEAAGGSLA</sequence>
<comment type="function">
    <text evidence="1">Binds to the 23S rRNA.</text>
</comment>
<comment type="subunit">
    <text evidence="1">Part of the 50S ribosomal subunit.</text>
</comment>
<comment type="similarity">
    <text evidence="1">Belongs to the universal ribosomal protein uL15 family.</text>
</comment>
<feature type="chain" id="PRO_0000104686" description="Large ribosomal subunit protein uL15">
    <location>
        <begin position="1"/>
        <end position="146"/>
    </location>
</feature>
<feature type="region of interest" description="Disordered" evidence="2">
    <location>
        <begin position="1"/>
        <end position="56"/>
    </location>
</feature>
<feature type="compositionally biased region" description="Gly residues" evidence="2">
    <location>
        <begin position="24"/>
        <end position="34"/>
    </location>
</feature>
<keyword id="KW-1185">Reference proteome</keyword>
<keyword id="KW-0687">Ribonucleoprotein</keyword>
<keyword id="KW-0689">Ribosomal protein</keyword>
<keyword id="KW-0694">RNA-binding</keyword>
<keyword id="KW-0699">rRNA-binding</keyword>
<evidence type="ECO:0000255" key="1">
    <source>
        <dbReference type="HAMAP-Rule" id="MF_01341"/>
    </source>
</evidence>
<evidence type="ECO:0000256" key="2">
    <source>
        <dbReference type="SAM" id="MobiDB-lite"/>
    </source>
</evidence>
<evidence type="ECO:0000305" key="3"/>
<accession>Q7VTB2</accession>